<organism>
    <name type="scientific">Wigglesworthia glossinidia brevipalpis</name>
    <dbReference type="NCBI Taxonomy" id="36870"/>
    <lineage>
        <taxon>Bacteria</taxon>
        <taxon>Pseudomonadati</taxon>
        <taxon>Pseudomonadota</taxon>
        <taxon>Gammaproteobacteria</taxon>
        <taxon>Enterobacterales</taxon>
        <taxon>Erwiniaceae</taxon>
        <taxon>Wigglesworthia</taxon>
    </lineage>
</organism>
<comment type="function">
    <text evidence="1">Catalyzes the decarboxylation of orotidine 5'-monophosphate (OMP) to uridine 5'-monophosphate (UMP).</text>
</comment>
<comment type="catalytic activity">
    <reaction evidence="1">
        <text>orotidine 5'-phosphate + H(+) = UMP + CO2</text>
        <dbReference type="Rhea" id="RHEA:11596"/>
        <dbReference type="ChEBI" id="CHEBI:15378"/>
        <dbReference type="ChEBI" id="CHEBI:16526"/>
        <dbReference type="ChEBI" id="CHEBI:57538"/>
        <dbReference type="ChEBI" id="CHEBI:57865"/>
        <dbReference type="EC" id="4.1.1.23"/>
    </reaction>
</comment>
<comment type="pathway">
    <text evidence="1">Pyrimidine metabolism; UMP biosynthesis via de novo pathway; UMP from orotate: step 2/2.</text>
</comment>
<comment type="subunit">
    <text evidence="1">Homodimer.</text>
</comment>
<comment type="similarity">
    <text evidence="1">Belongs to the OMP decarboxylase family. Type 1 subfamily.</text>
</comment>
<accession>Q8D2J1</accession>
<reference key="1">
    <citation type="journal article" date="2002" name="Nat. Genet.">
        <title>Genome sequence of the endocellular obligate symbiont of tsetse flies, Wigglesworthia glossinidia.</title>
        <authorList>
            <person name="Akman L."/>
            <person name="Yamashita A."/>
            <person name="Watanabe H."/>
            <person name="Oshima K."/>
            <person name="Shiba T."/>
            <person name="Hattori M."/>
            <person name="Aksoy S."/>
        </authorList>
    </citation>
    <scope>NUCLEOTIDE SEQUENCE [LARGE SCALE GENOMIC DNA]</scope>
</reference>
<keyword id="KW-0210">Decarboxylase</keyword>
<keyword id="KW-0456">Lyase</keyword>
<keyword id="KW-0665">Pyrimidine biosynthesis</keyword>
<keyword id="KW-1185">Reference proteome</keyword>
<feature type="chain" id="PRO_0000134600" description="Orotidine 5'-phosphate decarboxylase">
    <location>
        <begin position="1"/>
        <end position="232"/>
    </location>
</feature>
<feature type="active site" description="Proton donor" evidence="1">
    <location>
        <position position="62"/>
    </location>
</feature>
<feature type="binding site" evidence="1">
    <location>
        <position position="11"/>
    </location>
    <ligand>
        <name>substrate</name>
    </ligand>
</feature>
<feature type="binding site" evidence="1">
    <location>
        <position position="33"/>
    </location>
    <ligand>
        <name>substrate</name>
    </ligand>
</feature>
<feature type="binding site" evidence="1">
    <location>
        <begin position="60"/>
        <end position="69"/>
    </location>
    <ligand>
        <name>substrate</name>
    </ligand>
</feature>
<feature type="binding site" evidence="1">
    <location>
        <position position="119"/>
    </location>
    <ligand>
        <name>substrate</name>
    </ligand>
</feature>
<feature type="binding site" evidence="1">
    <location>
        <position position="180"/>
    </location>
    <ligand>
        <name>substrate</name>
    </ligand>
</feature>
<feature type="binding site" evidence="1">
    <location>
        <position position="189"/>
    </location>
    <ligand>
        <name>substrate</name>
    </ligand>
</feature>
<feature type="binding site" evidence="1">
    <location>
        <position position="209"/>
    </location>
    <ligand>
        <name>substrate</name>
    </ligand>
</feature>
<feature type="binding site" evidence="1">
    <location>
        <position position="210"/>
    </location>
    <ligand>
        <name>substrate</name>
    </ligand>
</feature>
<protein>
    <recommendedName>
        <fullName evidence="1">Orotidine 5'-phosphate decarboxylase</fullName>
        <ecNumber evidence="1">4.1.1.23</ecNumber>
    </recommendedName>
    <alternativeName>
        <fullName evidence="1">OMP decarboxylase</fullName>
        <shortName evidence="1">OMPDCase</shortName>
        <shortName evidence="1">OMPdecase</shortName>
    </alternativeName>
</protein>
<proteinExistence type="inferred from homology"/>
<evidence type="ECO:0000255" key="1">
    <source>
        <dbReference type="HAMAP-Rule" id="MF_01200"/>
    </source>
</evidence>
<sequence>MKLSPIIVALDYSNPKKAISFSKKISPDQCQLKIGHELFINSGFFLINFLQKNGFKIFLDLKLYDIPNTIKKTIFSLAKFGIWMVNVHASGGYNMMTAAKDALSHINNPPKLIAVTVLTSMEKSDLSKSKIFTKIINHVIHLSNNAYKCGLDGIVCSPWEAEKVRKKFGNNFIIVTPGIRFKNTNYNDQKRVMNPYDAIKSGSNYIVIGRPITKSSNPYLLLEKILSKLNNI</sequence>
<name>PYRF_WIGBR</name>
<dbReference type="EC" id="4.1.1.23" evidence="1"/>
<dbReference type="EMBL" id="BA000021">
    <property type="protein sequence ID" value="BAC24509.1"/>
    <property type="molecule type" value="Genomic_DNA"/>
</dbReference>
<dbReference type="SMR" id="Q8D2J1"/>
<dbReference type="STRING" id="36870.gene:10368863"/>
<dbReference type="KEGG" id="wbr:pyrF"/>
<dbReference type="eggNOG" id="COG0284">
    <property type="taxonomic scope" value="Bacteria"/>
</dbReference>
<dbReference type="HOGENOM" id="CLU_067069_0_0_6"/>
<dbReference type="OrthoDB" id="9806203at2"/>
<dbReference type="UniPathway" id="UPA00070">
    <property type="reaction ID" value="UER00120"/>
</dbReference>
<dbReference type="Proteomes" id="UP000000562">
    <property type="component" value="Chromosome"/>
</dbReference>
<dbReference type="GO" id="GO:0005829">
    <property type="term" value="C:cytosol"/>
    <property type="evidence" value="ECO:0007669"/>
    <property type="project" value="TreeGrafter"/>
</dbReference>
<dbReference type="GO" id="GO:0004590">
    <property type="term" value="F:orotidine-5'-phosphate decarboxylase activity"/>
    <property type="evidence" value="ECO:0007669"/>
    <property type="project" value="UniProtKB-UniRule"/>
</dbReference>
<dbReference type="GO" id="GO:0006207">
    <property type="term" value="P:'de novo' pyrimidine nucleobase biosynthetic process"/>
    <property type="evidence" value="ECO:0007669"/>
    <property type="project" value="InterPro"/>
</dbReference>
<dbReference type="GO" id="GO:0044205">
    <property type="term" value="P:'de novo' UMP biosynthetic process"/>
    <property type="evidence" value="ECO:0007669"/>
    <property type="project" value="UniProtKB-UniRule"/>
</dbReference>
<dbReference type="CDD" id="cd04725">
    <property type="entry name" value="OMP_decarboxylase_like"/>
    <property type="match status" value="1"/>
</dbReference>
<dbReference type="FunFam" id="3.20.20.70:FF:000015">
    <property type="entry name" value="Orotidine 5'-phosphate decarboxylase"/>
    <property type="match status" value="1"/>
</dbReference>
<dbReference type="Gene3D" id="3.20.20.70">
    <property type="entry name" value="Aldolase class I"/>
    <property type="match status" value="1"/>
</dbReference>
<dbReference type="HAMAP" id="MF_01200_B">
    <property type="entry name" value="OMPdecase_type1_B"/>
    <property type="match status" value="1"/>
</dbReference>
<dbReference type="InterPro" id="IPR013785">
    <property type="entry name" value="Aldolase_TIM"/>
</dbReference>
<dbReference type="InterPro" id="IPR014732">
    <property type="entry name" value="OMPdecase"/>
</dbReference>
<dbReference type="InterPro" id="IPR018089">
    <property type="entry name" value="OMPdecase_AS"/>
</dbReference>
<dbReference type="InterPro" id="IPR047596">
    <property type="entry name" value="OMPdecase_bac"/>
</dbReference>
<dbReference type="InterPro" id="IPR001754">
    <property type="entry name" value="OMPdeCOase_dom"/>
</dbReference>
<dbReference type="InterPro" id="IPR011060">
    <property type="entry name" value="RibuloseP-bd_barrel"/>
</dbReference>
<dbReference type="NCBIfam" id="NF001273">
    <property type="entry name" value="PRK00230.1"/>
    <property type="match status" value="1"/>
</dbReference>
<dbReference type="NCBIfam" id="TIGR01740">
    <property type="entry name" value="pyrF"/>
    <property type="match status" value="1"/>
</dbReference>
<dbReference type="PANTHER" id="PTHR32119">
    <property type="entry name" value="OROTIDINE 5'-PHOSPHATE DECARBOXYLASE"/>
    <property type="match status" value="1"/>
</dbReference>
<dbReference type="PANTHER" id="PTHR32119:SF2">
    <property type="entry name" value="OROTIDINE 5'-PHOSPHATE DECARBOXYLASE"/>
    <property type="match status" value="1"/>
</dbReference>
<dbReference type="Pfam" id="PF00215">
    <property type="entry name" value="OMPdecase"/>
    <property type="match status" value="1"/>
</dbReference>
<dbReference type="SMART" id="SM00934">
    <property type="entry name" value="OMPdecase"/>
    <property type="match status" value="1"/>
</dbReference>
<dbReference type="SUPFAM" id="SSF51366">
    <property type="entry name" value="Ribulose-phoshate binding barrel"/>
    <property type="match status" value="1"/>
</dbReference>
<dbReference type="PROSITE" id="PS00156">
    <property type="entry name" value="OMPDECASE"/>
    <property type="match status" value="1"/>
</dbReference>
<gene>
    <name evidence="1" type="primary">pyrF</name>
    <name type="ordered locus">WIGBR3630</name>
</gene>